<reference key="1">
    <citation type="journal article" date="2003" name="J. Mammal. Evol.">
        <title>Phylogeny and evolutionary history of the ground squirrels (Rodentia: Marmotinae).</title>
        <authorList>
            <person name="Harrison R.G."/>
            <person name="Bogdanowicz S.M."/>
            <person name="Hoffmann R.S."/>
            <person name="Yensen E."/>
            <person name="Sherman P.W."/>
        </authorList>
    </citation>
    <scope>NUCLEOTIDE SEQUENCE [GENOMIC DNA]</scope>
    <source>
        <strain>Isolate S64</strain>
        <strain>Isolate S65</strain>
    </source>
</reference>
<geneLocation type="mitochondrion"/>
<accession>Q9TF37</accession>
<accession>Q9TF36</accession>
<keyword id="KW-0249">Electron transport</keyword>
<keyword id="KW-0349">Heme</keyword>
<keyword id="KW-0408">Iron</keyword>
<keyword id="KW-0472">Membrane</keyword>
<keyword id="KW-0479">Metal-binding</keyword>
<keyword id="KW-0496">Mitochondrion</keyword>
<keyword id="KW-0999">Mitochondrion inner membrane</keyword>
<keyword id="KW-0679">Respiratory chain</keyword>
<keyword id="KW-0812">Transmembrane</keyword>
<keyword id="KW-1133">Transmembrane helix</keyword>
<keyword id="KW-0813">Transport</keyword>
<keyword id="KW-0830">Ubiquinone</keyword>
<proteinExistence type="inferred from homology"/>
<sequence>MTNIRKTHPLIKIINHSFIDLPAPSNISTWWNFGSLLGLCLAIQILTGLFLAMHYTSDTMTAFSSVTHICRDVNYGWLIRYMHANGASMFFICLFLHVGRGLYYGSYSYFETWNIGVILLFMVMATAFMGYVLPWGQMSFWGATVITNLLSAIPYIGTTLVEWIWGGFSVDKATLTRFFAFHFIXPFIITALVMVHLLFLHETGSNNPSGLISDSDKIPFHPYYTIKDILGVLLLIMALMTLVLFSPDLLGDPDNYTPANPLSTPPHIKPEWYFLFAYAILRSIPNKLGGVLALVFSILILMLFPLLHLAKQRSMMFRPLSQCMFWMLVADLFTLTWIGGQPVEYPFIIIGQLASILYFVIILLILPIVSLIENKLLKW</sequence>
<gene>
    <name type="primary">MT-CYB</name>
    <name type="synonym">COB</name>
    <name type="synonym">CYTB</name>
    <name type="synonym">MTCYB</name>
</gene>
<feature type="chain" id="PRO_0000255141" description="Cytochrome b">
    <location>
        <begin position="1"/>
        <end position="379"/>
    </location>
</feature>
<feature type="transmembrane region" description="Helical" evidence="2">
    <location>
        <begin position="33"/>
        <end position="53"/>
    </location>
</feature>
<feature type="transmembrane region" description="Helical" evidence="2">
    <location>
        <begin position="77"/>
        <end position="98"/>
    </location>
</feature>
<feature type="transmembrane region" description="Helical" evidence="2">
    <location>
        <begin position="113"/>
        <end position="133"/>
    </location>
</feature>
<feature type="transmembrane region" description="Helical" evidence="2">
    <location>
        <begin position="178"/>
        <end position="198"/>
    </location>
</feature>
<feature type="transmembrane region" description="Helical" evidence="2">
    <location>
        <begin position="226"/>
        <end position="246"/>
    </location>
</feature>
<feature type="transmembrane region" description="Helical" evidence="2">
    <location>
        <begin position="288"/>
        <end position="308"/>
    </location>
</feature>
<feature type="transmembrane region" description="Helical" evidence="2">
    <location>
        <begin position="320"/>
        <end position="340"/>
    </location>
</feature>
<feature type="transmembrane region" description="Helical" evidence="2">
    <location>
        <begin position="347"/>
        <end position="367"/>
    </location>
</feature>
<feature type="binding site" description="axial binding residue" evidence="2">
    <location>
        <position position="83"/>
    </location>
    <ligand>
        <name>heme b</name>
        <dbReference type="ChEBI" id="CHEBI:60344"/>
        <label>b562</label>
    </ligand>
    <ligandPart>
        <name>Fe</name>
        <dbReference type="ChEBI" id="CHEBI:18248"/>
    </ligandPart>
</feature>
<feature type="binding site" description="axial binding residue" evidence="2">
    <location>
        <position position="97"/>
    </location>
    <ligand>
        <name>heme b</name>
        <dbReference type="ChEBI" id="CHEBI:60344"/>
        <label>b566</label>
    </ligand>
    <ligandPart>
        <name>Fe</name>
        <dbReference type="ChEBI" id="CHEBI:18248"/>
    </ligandPart>
</feature>
<feature type="binding site" description="axial binding residue" evidence="2">
    <location>
        <position position="182"/>
    </location>
    <ligand>
        <name>heme b</name>
        <dbReference type="ChEBI" id="CHEBI:60344"/>
        <label>b562</label>
    </ligand>
    <ligandPart>
        <name>Fe</name>
        <dbReference type="ChEBI" id="CHEBI:18248"/>
    </ligandPart>
</feature>
<feature type="binding site" description="axial binding residue" evidence="2">
    <location>
        <position position="196"/>
    </location>
    <ligand>
        <name>heme b</name>
        <dbReference type="ChEBI" id="CHEBI:60344"/>
        <label>b566</label>
    </ligand>
    <ligandPart>
        <name>Fe</name>
        <dbReference type="ChEBI" id="CHEBI:18248"/>
    </ligandPart>
</feature>
<feature type="binding site" evidence="2">
    <location>
        <position position="201"/>
    </location>
    <ligand>
        <name>a ubiquinone</name>
        <dbReference type="ChEBI" id="CHEBI:16389"/>
    </ligand>
</feature>
<feature type="sequence variant" description="In strain: Isolate S65.">
    <original>P</original>
    <variation>S</variation>
    <location>
        <position position="134"/>
    </location>
</feature>
<feature type="sequence variant" description="In strain: Isolate S65.">
    <original>P</original>
    <variation>L</variation>
    <location>
        <position position="154"/>
    </location>
</feature>
<evidence type="ECO:0000250" key="1"/>
<evidence type="ECO:0000250" key="2">
    <source>
        <dbReference type="UniProtKB" id="P00157"/>
    </source>
</evidence>
<evidence type="ECO:0000255" key="3">
    <source>
        <dbReference type="PROSITE-ProRule" id="PRU00967"/>
    </source>
</evidence>
<evidence type="ECO:0000255" key="4">
    <source>
        <dbReference type="PROSITE-ProRule" id="PRU00968"/>
    </source>
</evidence>
<dbReference type="EMBL" id="AF157916">
    <property type="protein sequence ID" value="AAD50200.1"/>
    <property type="molecule type" value="Genomic_DNA"/>
</dbReference>
<dbReference type="EMBL" id="AF157917">
    <property type="protein sequence ID" value="AAD50201.1"/>
    <property type="molecule type" value="Genomic_DNA"/>
</dbReference>
<dbReference type="GO" id="GO:0005743">
    <property type="term" value="C:mitochondrial inner membrane"/>
    <property type="evidence" value="ECO:0007669"/>
    <property type="project" value="UniProtKB-SubCell"/>
</dbReference>
<dbReference type="GO" id="GO:0045275">
    <property type="term" value="C:respiratory chain complex III"/>
    <property type="evidence" value="ECO:0007669"/>
    <property type="project" value="InterPro"/>
</dbReference>
<dbReference type="GO" id="GO:0046872">
    <property type="term" value="F:metal ion binding"/>
    <property type="evidence" value="ECO:0007669"/>
    <property type="project" value="UniProtKB-KW"/>
</dbReference>
<dbReference type="GO" id="GO:0008121">
    <property type="term" value="F:ubiquinol-cytochrome-c reductase activity"/>
    <property type="evidence" value="ECO:0007669"/>
    <property type="project" value="InterPro"/>
</dbReference>
<dbReference type="GO" id="GO:0006122">
    <property type="term" value="P:mitochondrial electron transport, ubiquinol to cytochrome c"/>
    <property type="evidence" value="ECO:0007669"/>
    <property type="project" value="TreeGrafter"/>
</dbReference>
<dbReference type="CDD" id="cd00290">
    <property type="entry name" value="cytochrome_b_C"/>
    <property type="match status" value="1"/>
</dbReference>
<dbReference type="CDD" id="cd00284">
    <property type="entry name" value="Cytochrome_b_N"/>
    <property type="match status" value="1"/>
</dbReference>
<dbReference type="FunFam" id="1.20.810.10:FF:000002">
    <property type="entry name" value="Cytochrome b"/>
    <property type="match status" value="1"/>
</dbReference>
<dbReference type="Gene3D" id="1.20.810.10">
    <property type="entry name" value="Cytochrome Bc1 Complex, Chain C"/>
    <property type="match status" value="1"/>
</dbReference>
<dbReference type="InterPro" id="IPR005798">
    <property type="entry name" value="Cyt_b/b6_C"/>
</dbReference>
<dbReference type="InterPro" id="IPR036150">
    <property type="entry name" value="Cyt_b/b6_C_sf"/>
</dbReference>
<dbReference type="InterPro" id="IPR005797">
    <property type="entry name" value="Cyt_b/b6_N"/>
</dbReference>
<dbReference type="InterPro" id="IPR027387">
    <property type="entry name" value="Cytb/b6-like_sf"/>
</dbReference>
<dbReference type="InterPro" id="IPR030689">
    <property type="entry name" value="Cytochrome_b"/>
</dbReference>
<dbReference type="InterPro" id="IPR048260">
    <property type="entry name" value="Cytochrome_b_C_euk/bac"/>
</dbReference>
<dbReference type="InterPro" id="IPR048259">
    <property type="entry name" value="Cytochrome_b_N_euk/bac"/>
</dbReference>
<dbReference type="InterPro" id="IPR016174">
    <property type="entry name" value="Di-haem_cyt_TM"/>
</dbReference>
<dbReference type="PANTHER" id="PTHR19271">
    <property type="entry name" value="CYTOCHROME B"/>
    <property type="match status" value="1"/>
</dbReference>
<dbReference type="PANTHER" id="PTHR19271:SF16">
    <property type="entry name" value="CYTOCHROME B"/>
    <property type="match status" value="1"/>
</dbReference>
<dbReference type="Pfam" id="PF00032">
    <property type="entry name" value="Cytochrom_B_C"/>
    <property type="match status" value="1"/>
</dbReference>
<dbReference type="Pfam" id="PF00033">
    <property type="entry name" value="Cytochrome_B"/>
    <property type="match status" value="1"/>
</dbReference>
<dbReference type="PIRSF" id="PIRSF038885">
    <property type="entry name" value="COB"/>
    <property type="match status" value="1"/>
</dbReference>
<dbReference type="SUPFAM" id="SSF81648">
    <property type="entry name" value="a domain/subunit of cytochrome bc1 complex (Ubiquinol-cytochrome c reductase)"/>
    <property type="match status" value="1"/>
</dbReference>
<dbReference type="SUPFAM" id="SSF81342">
    <property type="entry name" value="Transmembrane di-heme cytochromes"/>
    <property type="match status" value="1"/>
</dbReference>
<dbReference type="PROSITE" id="PS51003">
    <property type="entry name" value="CYTB_CTER"/>
    <property type="match status" value="1"/>
</dbReference>
<dbReference type="PROSITE" id="PS51002">
    <property type="entry name" value="CYTB_NTER"/>
    <property type="match status" value="1"/>
</dbReference>
<protein>
    <recommendedName>
        <fullName>Cytochrome b</fullName>
    </recommendedName>
    <alternativeName>
        <fullName>Complex III subunit 3</fullName>
    </alternativeName>
    <alternativeName>
        <fullName>Complex III subunit III</fullName>
    </alternativeName>
    <alternativeName>
        <fullName>Cytochrome b-c1 complex subunit 3</fullName>
    </alternativeName>
    <alternativeName>
        <fullName>Ubiquinol-cytochrome-c reductase complex cytochrome b subunit</fullName>
    </alternativeName>
</protein>
<name>CYB_CALSW</name>
<comment type="function">
    <text evidence="2">Component of the ubiquinol-cytochrome c reductase complex (complex III or cytochrome b-c1 complex) that is part of the mitochondrial respiratory chain. The b-c1 complex mediates electron transfer from ubiquinol to cytochrome c. Contributes to the generation of a proton gradient across the mitochondrial membrane that is then used for ATP synthesis.</text>
</comment>
<comment type="cofactor">
    <cofactor evidence="2">
        <name>heme b</name>
        <dbReference type="ChEBI" id="CHEBI:60344"/>
    </cofactor>
    <text evidence="2">Binds 2 heme b groups non-covalently.</text>
</comment>
<comment type="subunit">
    <text evidence="2">The cytochrome bc1 complex contains 11 subunits: 3 respiratory subunits (MT-CYB, CYC1 and UQCRFS1), 2 core proteins (UQCRC1 and UQCRC2) and 6 low-molecular weight proteins (UQCRH/QCR6, UQCRB/QCR7, UQCRQ/QCR8, UQCR10/QCR9, UQCR11/QCR10 and a cleavage product of UQCRFS1). This cytochrome bc1 complex then forms a dimer.</text>
</comment>
<comment type="subcellular location">
    <subcellularLocation>
        <location evidence="2">Mitochondrion inner membrane</location>
        <topology evidence="2">Multi-pass membrane protein</topology>
    </subcellularLocation>
</comment>
<comment type="miscellaneous">
    <text evidence="1">Heme 1 (or BL or b562) is low-potential and absorbs at about 562 nm, and heme 2 (or BH or b566) is high-potential and absorbs at about 566 nm.</text>
</comment>
<comment type="similarity">
    <text evidence="3 4">Belongs to the cytochrome b family.</text>
</comment>
<comment type="caution">
    <text evidence="2">The full-length protein contains only eight transmembrane helices, not nine as predicted by bioinformatics tools.</text>
</comment>
<organism>
    <name type="scientific">Callospermophilus saturatus</name>
    <name type="common">Cascade golden-mantled ground squirrel</name>
    <name type="synonym">Spermophilus saturatus</name>
    <dbReference type="NCBI Taxonomy" id="99858"/>
    <lineage>
        <taxon>Eukaryota</taxon>
        <taxon>Metazoa</taxon>
        <taxon>Chordata</taxon>
        <taxon>Craniata</taxon>
        <taxon>Vertebrata</taxon>
        <taxon>Euteleostomi</taxon>
        <taxon>Mammalia</taxon>
        <taxon>Eutheria</taxon>
        <taxon>Euarchontoglires</taxon>
        <taxon>Glires</taxon>
        <taxon>Rodentia</taxon>
        <taxon>Sciuromorpha</taxon>
        <taxon>Sciuridae</taxon>
        <taxon>Xerinae</taxon>
        <taxon>Marmotini</taxon>
        <taxon>Callospermophilus</taxon>
    </lineage>
</organism>